<comment type="function">
    <text>Binds DNA as a heterodimer with MAX and represses transcription. Binds to the canonical E box sequence 5'-CACGTG-3' and, with higher affinity, to 5'-CACGCG-3'.</text>
</comment>
<comment type="subunit">
    <text>Efficient DNA binding requires dimerization with another bHLH protein. Binds DNA as a homodimer or a heterodimer with MAX.</text>
</comment>
<comment type="interaction">
    <interactant intactId="EBI-7959025">
        <id>Q99583</id>
    </interactant>
    <interactant intactId="EBI-751711">
        <id>P61244</id>
        <label>MAX</label>
    </interactant>
    <organismsDiffer>false</organismsDiffer>
    <experiments>10</experiments>
</comment>
<comment type="interaction">
    <interactant intactId="EBI-7959025">
        <id>Q99583</id>
    </interactant>
    <interactant intactId="EBI-7959025">
        <id>Q99583</id>
        <label>MNT</label>
    </interactant>
    <organismsDiffer>false</organismsDiffer>
    <experiments>2</experiments>
</comment>
<comment type="interaction">
    <interactant intactId="EBI-7959025">
        <id>Q99583</id>
    </interactant>
    <interactant intactId="EBI-713635">
        <id>O43639</id>
        <label>NCK2</label>
    </interactant>
    <organismsDiffer>false</organismsDiffer>
    <experiments>3</experiments>
</comment>
<comment type="interaction">
    <interactant intactId="EBI-7959025">
        <id>Q99583</id>
    </interactant>
    <interactant intactId="EBI-349034">
        <id>Q60520</id>
        <label>Sin3a</label>
    </interactant>
    <organismsDiffer>true</organismsDiffer>
    <experiments>3</experiments>
</comment>
<comment type="subcellular location">
    <subcellularLocation>
        <location>Nucleus</location>
    </subcellularLocation>
</comment>
<gene>
    <name type="primary">MNT</name>
    <name type="synonym">BHLHD3</name>
    <name type="synonym">ROX</name>
</gene>
<dbReference type="EMBL" id="X96401">
    <property type="protein sequence ID" value="CAA65265.1"/>
    <property type="molecule type" value="mRNA"/>
</dbReference>
<dbReference type="EMBL" id="Y13440">
    <property type="protein sequence ID" value="CAA73851.1"/>
    <property type="molecule type" value="Genomic_DNA"/>
</dbReference>
<dbReference type="EMBL" id="Y13441">
    <property type="protein sequence ID" value="CAA73851.1"/>
    <property type="status" value="JOINED"/>
    <property type="molecule type" value="Genomic_DNA"/>
</dbReference>
<dbReference type="EMBL" id="Y13442">
    <property type="protein sequence ID" value="CAA73851.1"/>
    <property type="status" value="JOINED"/>
    <property type="molecule type" value="Genomic_DNA"/>
</dbReference>
<dbReference type="EMBL" id="Y13443">
    <property type="protein sequence ID" value="CAA73851.1"/>
    <property type="status" value="JOINED"/>
    <property type="molecule type" value="Genomic_DNA"/>
</dbReference>
<dbReference type="EMBL" id="Y13444">
    <property type="protein sequence ID" value="CAA73851.1"/>
    <property type="status" value="JOINED"/>
    <property type="molecule type" value="Genomic_DNA"/>
</dbReference>
<dbReference type="EMBL" id="AK291596">
    <property type="protein sequence ID" value="BAF84285.1"/>
    <property type="molecule type" value="mRNA"/>
</dbReference>
<dbReference type="EMBL" id="CH471108">
    <property type="protein sequence ID" value="EAW90541.1"/>
    <property type="molecule type" value="Genomic_DNA"/>
</dbReference>
<dbReference type="EMBL" id="CH471108">
    <property type="protein sequence ID" value="EAW90542.1"/>
    <property type="molecule type" value="Genomic_DNA"/>
</dbReference>
<dbReference type="EMBL" id="BC117563">
    <property type="protein sequence ID" value="AAI17564.1"/>
    <property type="molecule type" value="mRNA"/>
</dbReference>
<dbReference type="CCDS" id="CCDS11018.1"/>
<dbReference type="RefSeq" id="NP_064706.1">
    <property type="nucleotide sequence ID" value="NM_020310.3"/>
</dbReference>
<dbReference type="SMR" id="Q99583"/>
<dbReference type="BioGRID" id="110478">
    <property type="interactions" value="32"/>
</dbReference>
<dbReference type="ComplexPortal" id="CPX-2518">
    <property type="entry name" value="MNT-MAX transcriptional repressor complex"/>
</dbReference>
<dbReference type="ComplexPortal" id="CPX-2521">
    <property type="entry name" value="MNT-MLX transcriptional repressor complex"/>
</dbReference>
<dbReference type="ELM" id="Q99583"/>
<dbReference type="FunCoup" id="Q99583">
    <property type="interactions" value="2552"/>
</dbReference>
<dbReference type="IntAct" id="Q99583">
    <property type="interactions" value="14"/>
</dbReference>
<dbReference type="MINT" id="Q99583"/>
<dbReference type="STRING" id="9606.ENSP00000174618"/>
<dbReference type="GlyCosmos" id="Q99583">
    <property type="glycosylation" value="2 sites, 2 glycans"/>
</dbReference>
<dbReference type="GlyGen" id="Q99583">
    <property type="glycosylation" value="6 sites, 2 O-linked glycans (2 sites)"/>
</dbReference>
<dbReference type="iPTMnet" id="Q99583"/>
<dbReference type="PhosphoSitePlus" id="Q99583"/>
<dbReference type="SwissPalm" id="Q99583"/>
<dbReference type="BioMuta" id="MNT"/>
<dbReference type="DMDM" id="3914034"/>
<dbReference type="jPOST" id="Q99583"/>
<dbReference type="MassIVE" id="Q99583"/>
<dbReference type="PaxDb" id="9606-ENSP00000174618"/>
<dbReference type="PeptideAtlas" id="Q99583"/>
<dbReference type="ProteomicsDB" id="78341"/>
<dbReference type="Pumba" id="Q99583"/>
<dbReference type="Antibodypedia" id="22924">
    <property type="antibodies" value="146 antibodies from 31 providers"/>
</dbReference>
<dbReference type="DNASU" id="4335"/>
<dbReference type="Ensembl" id="ENST00000174618.5">
    <property type="protein sequence ID" value="ENSP00000174618.4"/>
    <property type="gene ID" value="ENSG00000070444.15"/>
</dbReference>
<dbReference type="GeneID" id="4335"/>
<dbReference type="KEGG" id="hsa:4335"/>
<dbReference type="MANE-Select" id="ENST00000174618.5">
    <property type="protein sequence ID" value="ENSP00000174618.4"/>
    <property type="RefSeq nucleotide sequence ID" value="NM_020310.3"/>
    <property type="RefSeq protein sequence ID" value="NP_064706.1"/>
</dbReference>
<dbReference type="UCSC" id="uc002fur.4">
    <property type="organism name" value="human"/>
</dbReference>
<dbReference type="AGR" id="HGNC:7188"/>
<dbReference type="CTD" id="4335"/>
<dbReference type="DisGeNET" id="4335"/>
<dbReference type="GeneCards" id="MNT"/>
<dbReference type="HGNC" id="HGNC:7188">
    <property type="gene designation" value="MNT"/>
</dbReference>
<dbReference type="HPA" id="ENSG00000070444">
    <property type="expression patterns" value="Low tissue specificity"/>
</dbReference>
<dbReference type="MIM" id="603039">
    <property type="type" value="gene"/>
</dbReference>
<dbReference type="neXtProt" id="NX_Q99583"/>
<dbReference type="OpenTargets" id="ENSG00000070444"/>
<dbReference type="PharmGKB" id="PA30898"/>
<dbReference type="VEuPathDB" id="HostDB:ENSG00000070444"/>
<dbReference type="eggNOG" id="KOG2483">
    <property type="taxonomic scope" value="Eukaryota"/>
</dbReference>
<dbReference type="GeneTree" id="ENSGT00510000048287"/>
<dbReference type="HOGENOM" id="CLU_020165_1_0_1"/>
<dbReference type="InParanoid" id="Q99583"/>
<dbReference type="OMA" id="THAQVNG"/>
<dbReference type="OrthoDB" id="5981879at2759"/>
<dbReference type="PAN-GO" id="Q99583">
    <property type="GO annotations" value="3 GO annotations based on evolutionary models"/>
</dbReference>
<dbReference type="PhylomeDB" id="Q99583"/>
<dbReference type="TreeFam" id="TF315654"/>
<dbReference type="PathwayCommons" id="Q99583"/>
<dbReference type="SignaLink" id="Q99583"/>
<dbReference type="SIGNOR" id="Q99583"/>
<dbReference type="BioGRID-ORCS" id="4335">
    <property type="hits" value="67 hits in 1182 CRISPR screens"/>
</dbReference>
<dbReference type="ChiTaRS" id="MNT">
    <property type="organism name" value="human"/>
</dbReference>
<dbReference type="GeneWiki" id="MNT_(gene)"/>
<dbReference type="GenomeRNAi" id="4335"/>
<dbReference type="Pharos" id="Q99583">
    <property type="development level" value="Tbio"/>
</dbReference>
<dbReference type="PRO" id="PR:Q99583"/>
<dbReference type="Proteomes" id="UP000005640">
    <property type="component" value="Chromosome 17"/>
</dbReference>
<dbReference type="RNAct" id="Q99583">
    <property type="molecule type" value="protein"/>
</dbReference>
<dbReference type="Bgee" id="ENSG00000070444">
    <property type="expression patterns" value="Expressed in cervix squamous epithelium and 207 other cell types or tissues"/>
</dbReference>
<dbReference type="ExpressionAtlas" id="Q99583">
    <property type="expression patterns" value="baseline and differential"/>
</dbReference>
<dbReference type="GO" id="GO:0000785">
    <property type="term" value="C:chromatin"/>
    <property type="evidence" value="ECO:0000247"/>
    <property type="project" value="NTNU_SB"/>
</dbReference>
<dbReference type="GO" id="GO:0005654">
    <property type="term" value="C:nucleoplasm"/>
    <property type="evidence" value="ECO:0000314"/>
    <property type="project" value="HPA"/>
</dbReference>
<dbReference type="GO" id="GO:0003682">
    <property type="term" value="F:chromatin binding"/>
    <property type="evidence" value="ECO:0007669"/>
    <property type="project" value="Ensembl"/>
</dbReference>
<dbReference type="GO" id="GO:0003700">
    <property type="term" value="F:DNA-binding transcription factor activity"/>
    <property type="evidence" value="ECO:0000304"/>
    <property type="project" value="ProtInc"/>
</dbReference>
<dbReference type="GO" id="GO:0000981">
    <property type="term" value="F:DNA-binding transcription factor activity, RNA polymerase II-specific"/>
    <property type="evidence" value="ECO:0000247"/>
    <property type="project" value="NTNU_SB"/>
</dbReference>
<dbReference type="GO" id="GO:0001227">
    <property type="term" value="F:DNA-binding transcription repressor activity, RNA polymerase II-specific"/>
    <property type="evidence" value="ECO:0000314"/>
    <property type="project" value="NTNU_SB"/>
</dbReference>
<dbReference type="GO" id="GO:0042802">
    <property type="term" value="F:identical protein binding"/>
    <property type="evidence" value="ECO:0000353"/>
    <property type="project" value="IntAct"/>
</dbReference>
<dbReference type="GO" id="GO:0046983">
    <property type="term" value="F:protein dimerization activity"/>
    <property type="evidence" value="ECO:0007669"/>
    <property type="project" value="InterPro"/>
</dbReference>
<dbReference type="GO" id="GO:0000978">
    <property type="term" value="F:RNA polymerase II cis-regulatory region sequence-specific DNA binding"/>
    <property type="evidence" value="ECO:0000318"/>
    <property type="project" value="GO_Central"/>
</dbReference>
<dbReference type="GO" id="GO:0000977">
    <property type="term" value="F:RNA polymerase II transcription regulatory region sequence-specific DNA binding"/>
    <property type="evidence" value="ECO:0000314"/>
    <property type="project" value="NTNU_SB"/>
</dbReference>
<dbReference type="GO" id="GO:0090398">
    <property type="term" value="P:cellular senescence"/>
    <property type="evidence" value="ECO:0007669"/>
    <property type="project" value="Ensembl"/>
</dbReference>
<dbReference type="GO" id="GO:2001234">
    <property type="term" value="P:negative regulation of apoptotic signaling pathway"/>
    <property type="evidence" value="ECO:0007669"/>
    <property type="project" value="Ensembl"/>
</dbReference>
<dbReference type="GO" id="GO:0000122">
    <property type="term" value="P:negative regulation of transcription by RNA polymerase II"/>
    <property type="evidence" value="ECO:0000314"/>
    <property type="project" value="NTNU_SB"/>
</dbReference>
<dbReference type="GO" id="GO:0051726">
    <property type="term" value="P:regulation of cell cycle"/>
    <property type="evidence" value="ECO:0007669"/>
    <property type="project" value="Ensembl"/>
</dbReference>
<dbReference type="GO" id="GO:0006357">
    <property type="term" value="P:regulation of transcription by RNA polymerase II"/>
    <property type="evidence" value="ECO:0000318"/>
    <property type="project" value="GO_Central"/>
</dbReference>
<dbReference type="GO" id="GO:0006366">
    <property type="term" value="P:transcription by RNA polymerase II"/>
    <property type="evidence" value="ECO:0000304"/>
    <property type="project" value="ProtInc"/>
</dbReference>
<dbReference type="CDD" id="cd11402">
    <property type="entry name" value="bHLHzip_Mnt"/>
    <property type="match status" value="1"/>
</dbReference>
<dbReference type="FunFam" id="4.10.280.10:FF:000034">
    <property type="entry name" value="MAX network transcriptional repressor"/>
    <property type="match status" value="1"/>
</dbReference>
<dbReference type="Gene3D" id="4.10.280.10">
    <property type="entry name" value="Helix-loop-helix DNA-binding domain"/>
    <property type="match status" value="1"/>
</dbReference>
<dbReference type="InterPro" id="IPR011598">
    <property type="entry name" value="bHLH_dom"/>
</dbReference>
<dbReference type="InterPro" id="IPR036638">
    <property type="entry name" value="HLH_DNA-bd_sf"/>
</dbReference>
<dbReference type="PANTHER" id="PTHR11969">
    <property type="entry name" value="MAX DIMERIZATION, MAD"/>
    <property type="match status" value="1"/>
</dbReference>
<dbReference type="PANTHER" id="PTHR11969:SF99">
    <property type="entry name" value="MAX-BINDING PROTEIN MNT"/>
    <property type="match status" value="1"/>
</dbReference>
<dbReference type="Pfam" id="PF00010">
    <property type="entry name" value="HLH"/>
    <property type="match status" value="1"/>
</dbReference>
<dbReference type="SMART" id="SM00353">
    <property type="entry name" value="HLH"/>
    <property type="match status" value="1"/>
</dbReference>
<dbReference type="SUPFAM" id="SSF47459">
    <property type="entry name" value="HLH, helix-loop-helix DNA-binding domain"/>
    <property type="match status" value="1"/>
</dbReference>
<dbReference type="PROSITE" id="PS50888">
    <property type="entry name" value="BHLH"/>
    <property type="match status" value="1"/>
</dbReference>
<name>MNT_HUMAN</name>
<proteinExistence type="evidence at protein level"/>
<feature type="initiator methionine" description="Removed" evidence="3">
    <location>
        <position position="1"/>
    </location>
</feature>
<feature type="chain" id="PRO_0000127281" description="Max-binding protein MNT">
    <location>
        <begin position="2"/>
        <end position="582"/>
    </location>
</feature>
<feature type="domain" description="bHLH" evidence="1">
    <location>
        <begin position="220"/>
        <end position="271"/>
    </location>
</feature>
<feature type="region of interest" description="Disordered" evidence="2">
    <location>
        <begin position="18"/>
        <end position="224"/>
    </location>
</feature>
<feature type="region of interest" description="Leucine-zipper">
    <location>
        <begin position="271"/>
        <end position="299"/>
    </location>
</feature>
<feature type="region of interest" description="Disordered" evidence="2">
    <location>
        <begin position="319"/>
        <end position="422"/>
    </location>
</feature>
<feature type="compositionally biased region" description="Basic and acidic residues" evidence="2">
    <location>
        <begin position="22"/>
        <end position="42"/>
    </location>
</feature>
<feature type="compositionally biased region" description="Pro residues" evidence="2">
    <location>
        <begin position="61"/>
        <end position="82"/>
    </location>
</feature>
<feature type="compositionally biased region" description="Pro residues" evidence="2">
    <location>
        <begin position="99"/>
        <end position="108"/>
    </location>
</feature>
<feature type="compositionally biased region" description="Low complexity" evidence="2">
    <location>
        <begin position="109"/>
        <end position="123"/>
    </location>
</feature>
<feature type="compositionally biased region" description="Pro residues" evidence="2">
    <location>
        <begin position="135"/>
        <end position="149"/>
    </location>
</feature>
<feature type="compositionally biased region" description="Pro residues" evidence="2">
    <location>
        <begin position="160"/>
        <end position="171"/>
    </location>
</feature>
<feature type="compositionally biased region" description="Basic and acidic residues" evidence="2">
    <location>
        <begin position="203"/>
        <end position="214"/>
    </location>
</feature>
<feature type="compositionally biased region" description="Acidic residues" evidence="2">
    <location>
        <begin position="334"/>
        <end position="345"/>
    </location>
</feature>
<feature type="compositionally biased region" description="Pro residues" evidence="2">
    <location>
        <begin position="368"/>
        <end position="381"/>
    </location>
</feature>
<feature type="compositionally biased region" description="Low complexity" evidence="2">
    <location>
        <begin position="387"/>
        <end position="408"/>
    </location>
</feature>
<feature type="compositionally biased region" description="Pro residues" evidence="2">
    <location>
        <begin position="409"/>
        <end position="418"/>
    </location>
</feature>
<feature type="modified residue" description="N-acetylserine" evidence="3">
    <location>
        <position position="2"/>
    </location>
</feature>
<feature type="sequence variant" id="VAR_061258" description="In dbSNP:rs7207965.">
    <original>A</original>
    <variation>T</variation>
    <location>
        <position position="109"/>
    </location>
</feature>
<accession>Q99583</accession>
<accession>A8K6D1</accession>
<accession>D3DTI7</accession>
<accession>Q1ED38</accession>
<evidence type="ECO:0000255" key="1">
    <source>
        <dbReference type="PROSITE-ProRule" id="PRU00981"/>
    </source>
</evidence>
<evidence type="ECO:0000256" key="2">
    <source>
        <dbReference type="SAM" id="MobiDB-lite"/>
    </source>
</evidence>
<evidence type="ECO:0007744" key="3">
    <source>
    </source>
</evidence>
<organism>
    <name type="scientific">Homo sapiens</name>
    <name type="common">Human</name>
    <dbReference type="NCBI Taxonomy" id="9606"/>
    <lineage>
        <taxon>Eukaryota</taxon>
        <taxon>Metazoa</taxon>
        <taxon>Chordata</taxon>
        <taxon>Craniata</taxon>
        <taxon>Vertebrata</taxon>
        <taxon>Euteleostomi</taxon>
        <taxon>Mammalia</taxon>
        <taxon>Eutheria</taxon>
        <taxon>Euarchontoglires</taxon>
        <taxon>Primates</taxon>
        <taxon>Haplorrhini</taxon>
        <taxon>Catarrhini</taxon>
        <taxon>Hominidae</taxon>
        <taxon>Homo</taxon>
    </lineage>
</organism>
<keyword id="KW-0007">Acetylation</keyword>
<keyword id="KW-0238">DNA-binding</keyword>
<keyword id="KW-0539">Nucleus</keyword>
<keyword id="KW-1267">Proteomics identification</keyword>
<keyword id="KW-1185">Reference proteome</keyword>
<keyword id="KW-0678">Repressor</keyword>
<keyword id="KW-0804">Transcription</keyword>
<keyword id="KW-0805">Transcription regulation</keyword>
<protein>
    <recommendedName>
        <fullName>Max-binding protein MNT</fullName>
    </recommendedName>
    <alternativeName>
        <fullName>Class D basic helix-loop-helix protein 3</fullName>
        <shortName>bHLHd3</shortName>
    </alternativeName>
    <alternativeName>
        <fullName>Myc antagonist MNT</fullName>
    </alternativeName>
    <alternativeName>
        <fullName>Protein ROX</fullName>
    </alternativeName>
</protein>
<reference key="1">
    <citation type="journal article" date="1997" name="EMBO J.">
        <title>Rox, a novel bHLHZip protein expressed in quiescent cells that heterodimerizes with Max, binds a non-canonical E box and acts as a transcriptional repressor.</title>
        <authorList>
            <person name="Meroni G."/>
            <person name="Reymond A."/>
            <person name="Alcalay M."/>
            <person name="Borsani G."/>
            <person name="Tanigami A."/>
            <person name="Tonlorenzi R."/>
            <person name="Lo Nigro C."/>
            <person name="Messali S."/>
            <person name="Zollo M."/>
            <person name="Ledbetter D.H."/>
            <person name="Brent R."/>
            <person name="Ballabio A."/>
            <person name="Carrozzo R."/>
        </authorList>
    </citation>
    <scope>NUCLEOTIDE SEQUENCE [MRNA]</scope>
    <source>
        <tissue>Fetal brain</tissue>
    </source>
</reference>
<reference key="2">
    <citation type="journal article" date="1998" name="Genomics">
        <title>The human ROX gene: genomic structure and mutation analysis in human breast tumors.</title>
        <authorList>
            <person name="Nigro C.L."/>
            <person name="Venesio T."/>
            <person name="Reymond A."/>
            <person name="Meroni G."/>
            <person name="Alberici P."/>
            <person name="Cainarca S."/>
            <person name="Enrico F."/>
            <person name="Stack M."/>
            <person name="Ledbetter D.H."/>
            <person name="Liscia D.S."/>
            <person name="Ballabio A."/>
            <person name="Carrozzo R."/>
        </authorList>
    </citation>
    <scope>NUCLEOTIDE SEQUENCE [GENOMIC DNA / MRNA]</scope>
</reference>
<reference key="3">
    <citation type="journal article" date="2004" name="Nat. Genet.">
        <title>Complete sequencing and characterization of 21,243 full-length human cDNAs.</title>
        <authorList>
            <person name="Ota T."/>
            <person name="Suzuki Y."/>
            <person name="Nishikawa T."/>
            <person name="Otsuki T."/>
            <person name="Sugiyama T."/>
            <person name="Irie R."/>
            <person name="Wakamatsu A."/>
            <person name="Hayashi K."/>
            <person name="Sato H."/>
            <person name="Nagai K."/>
            <person name="Kimura K."/>
            <person name="Makita H."/>
            <person name="Sekine M."/>
            <person name="Obayashi M."/>
            <person name="Nishi T."/>
            <person name="Shibahara T."/>
            <person name="Tanaka T."/>
            <person name="Ishii S."/>
            <person name="Yamamoto J."/>
            <person name="Saito K."/>
            <person name="Kawai Y."/>
            <person name="Isono Y."/>
            <person name="Nakamura Y."/>
            <person name="Nagahari K."/>
            <person name="Murakami K."/>
            <person name="Yasuda T."/>
            <person name="Iwayanagi T."/>
            <person name="Wagatsuma M."/>
            <person name="Shiratori A."/>
            <person name="Sudo H."/>
            <person name="Hosoiri T."/>
            <person name="Kaku Y."/>
            <person name="Kodaira H."/>
            <person name="Kondo H."/>
            <person name="Sugawara M."/>
            <person name="Takahashi M."/>
            <person name="Kanda K."/>
            <person name="Yokoi T."/>
            <person name="Furuya T."/>
            <person name="Kikkawa E."/>
            <person name="Omura Y."/>
            <person name="Abe K."/>
            <person name="Kamihara K."/>
            <person name="Katsuta N."/>
            <person name="Sato K."/>
            <person name="Tanikawa M."/>
            <person name="Yamazaki M."/>
            <person name="Ninomiya K."/>
            <person name="Ishibashi T."/>
            <person name="Yamashita H."/>
            <person name="Murakawa K."/>
            <person name="Fujimori K."/>
            <person name="Tanai H."/>
            <person name="Kimata M."/>
            <person name="Watanabe M."/>
            <person name="Hiraoka S."/>
            <person name="Chiba Y."/>
            <person name="Ishida S."/>
            <person name="Ono Y."/>
            <person name="Takiguchi S."/>
            <person name="Watanabe S."/>
            <person name="Yosida M."/>
            <person name="Hotuta T."/>
            <person name="Kusano J."/>
            <person name="Kanehori K."/>
            <person name="Takahashi-Fujii A."/>
            <person name="Hara H."/>
            <person name="Tanase T.-O."/>
            <person name="Nomura Y."/>
            <person name="Togiya S."/>
            <person name="Komai F."/>
            <person name="Hara R."/>
            <person name="Takeuchi K."/>
            <person name="Arita M."/>
            <person name="Imose N."/>
            <person name="Musashino K."/>
            <person name="Yuuki H."/>
            <person name="Oshima A."/>
            <person name="Sasaki N."/>
            <person name="Aotsuka S."/>
            <person name="Yoshikawa Y."/>
            <person name="Matsunawa H."/>
            <person name="Ichihara T."/>
            <person name="Shiohata N."/>
            <person name="Sano S."/>
            <person name="Moriya S."/>
            <person name="Momiyama H."/>
            <person name="Satoh N."/>
            <person name="Takami S."/>
            <person name="Terashima Y."/>
            <person name="Suzuki O."/>
            <person name="Nakagawa S."/>
            <person name="Senoh A."/>
            <person name="Mizoguchi H."/>
            <person name="Goto Y."/>
            <person name="Shimizu F."/>
            <person name="Wakebe H."/>
            <person name="Hishigaki H."/>
            <person name="Watanabe T."/>
            <person name="Sugiyama A."/>
            <person name="Takemoto M."/>
            <person name="Kawakami B."/>
            <person name="Yamazaki M."/>
            <person name="Watanabe K."/>
            <person name="Kumagai A."/>
            <person name="Itakura S."/>
            <person name="Fukuzumi Y."/>
            <person name="Fujimori Y."/>
            <person name="Komiyama M."/>
            <person name="Tashiro H."/>
            <person name="Tanigami A."/>
            <person name="Fujiwara T."/>
            <person name="Ono T."/>
            <person name="Yamada K."/>
            <person name="Fujii Y."/>
            <person name="Ozaki K."/>
            <person name="Hirao M."/>
            <person name="Ohmori Y."/>
            <person name="Kawabata A."/>
            <person name="Hikiji T."/>
            <person name="Kobatake N."/>
            <person name="Inagaki H."/>
            <person name="Ikema Y."/>
            <person name="Okamoto S."/>
            <person name="Okitani R."/>
            <person name="Kawakami T."/>
            <person name="Noguchi S."/>
            <person name="Itoh T."/>
            <person name="Shigeta K."/>
            <person name="Senba T."/>
            <person name="Matsumura K."/>
            <person name="Nakajima Y."/>
            <person name="Mizuno T."/>
            <person name="Morinaga M."/>
            <person name="Sasaki M."/>
            <person name="Togashi T."/>
            <person name="Oyama M."/>
            <person name="Hata H."/>
            <person name="Watanabe M."/>
            <person name="Komatsu T."/>
            <person name="Mizushima-Sugano J."/>
            <person name="Satoh T."/>
            <person name="Shirai Y."/>
            <person name="Takahashi Y."/>
            <person name="Nakagawa K."/>
            <person name="Okumura K."/>
            <person name="Nagase T."/>
            <person name="Nomura N."/>
            <person name="Kikuchi H."/>
            <person name="Masuho Y."/>
            <person name="Yamashita R."/>
            <person name="Nakai K."/>
            <person name="Yada T."/>
            <person name="Nakamura Y."/>
            <person name="Ohara O."/>
            <person name="Isogai T."/>
            <person name="Sugano S."/>
        </authorList>
    </citation>
    <scope>NUCLEOTIDE SEQUENCE [LARGE SCALE MRNA]</scope>
    <source>
        <tissue>Placenta</tissue>
    </source>
</reference>
<reference key="4">
    <citation type="submission" date="2005-09" db="EMBL/GenBank/DDBJ databases">
        <authorList>
            <person name="Mural R.J."/>
            <person name="Istrail S."/>
            <person name="Sutton G.G."/>
            <person name="Florea L."/>
            <person name="Halpern A.L."/>
            <person name="Mobarry C.M."/>
            <person name="Lippert R."/>
            <person name="Walenz B."/>
            <person name="Shatkay H."/>
            <person name="Dew I."/>
            <person name="Miller J.R."/>
            <person name="Flanigan M.J."/>
            <person name="Edwards N.J."/>
            <person name="Bolanos R."/>
            <person name="Fasulo D."/>
            <person name="Halldorsson B.V."/>
            <person name="Hannenhalli S."/>
            <person name="Turner R."/>
            <person name="Yooseph S."/>
            <person name="Lu F."/>
            <person name="Nusskern D.R."/>
            <person name="Shue B.C."/>
            <person name="Zheng X.H."/>
            <person name="Zhong F."/>
            <person name="Delcher A.L."/>
            <person name="Huson D.H."/>
            <person name="Kravitz S.A."/>
            <person name="Mouchard L."/>
            <person name="Reinert K."/>
            <person name="Remington K.A."/>
            <person name="Clark A.G."/>
            <person name="Waterman M.S."/>
            <person name="Eichler E.E."/>
            <person name="Adams M.D."/>
            <person name="Hunkapiller M.W."/>
            <person name="Myers E.W."/>
            <person name="Venter J.C."/>
        </authorList>
    </citation>
    <scope>NUCLEOTIDE SEQUENCE [LARGE SCALE GENOMIC DNA]</scope>
</reference>
<reference key="5">
    <citation type="journal article" date="2004" name="Genome Res.">
        <title>The status, quality, and expansion of the NIH full-length cDNA project: the Mammalian Gene Collection (MGC).</title>
        <authorList>
            <consortium name="The MGC Project Team"/>
        </authorList>
    </citation>
    <scope>NUCLEOTIDE SEQUENCE [LARGE SCALE MRNA]</scope>
    <source>
        <tissue>Pancreas</tissue>
    </source>
</reference>
<reference key="6">
    <citation type="journal article" date="2012" name="Proc. Natl. Acad. Sci. U.S.A.">
        <title>N-terminal acetylome analyses and functional insights of the N-terminal acetyltransferase NatB.</title>
        <authorList>
            <person name="Van Damme P."/>
            <person name="Lasa M."/>
            <person name="Polevoda B."/>
            <person name="Gazquez C."/>
            <person name="Elosegui-Artola A."/>
            <person name="Kim D.S."/>
            <person name="De Juan-Pardo E."/>
            <person name="Demeyer K."/>
            <person name="Hole K."/>
            <person name="Larrea E."/>
            <person name="Timmerman E."/>
            <person name="Prieto J."/>
            <person name="Arnesen T."/>
            <person name="Sherman F."/>
            <person name="Gevaert K."/>
            <person name="Aldabe R."/>
        </authorList>
    </citation>
    <scope>ACETYLATION [LARGE SCALE ANALYSIS] AT SER-2</scope>
    <scope>CLEAVAGE OF INITIATOR METHIONINE [LARGE SCALE ANALYSIS]</scope>
    <scope>IDENTIFICATION BY MASS SPECTROMETRY [LARGE SCALE ANALYSIS]</scope>
</reference>
<sequence length="582" mass="62300">MSIETLLEAARFLEWQAQQQQRAREEQERLRLEQEREQEQKKANSLARLAHTLPVEEPRMEAPPLPLSPPAPPPAPPPPLATPAPLTVIPIPVVTNSPQPLPPPPPLPAAAQPLPLAPRQPALVGAPGLSIKEPAPLPSRPQVPTPAPLLPDSKATIPPNGSPKPLQPLPTPVLTIAPHPGVQPQLAPQQPPPPTLGTLKLAPAEEVKSSEQKKRPGGIGTREVHNKLEKNRRAHLKECFETLKRNIPNVDDKKTSNLSVLRTALRYIQSLKRKEKEYEHEMERLAREKIATQQRLAELKHELSQWMDVLEIDRVLRQTGQPEDDQASTSTASEGEDNIDEDMEEDRAGLGPPKLSHRPQPELLKSTLPPPSTTPAPLPPHPHPHPHSVALPPAHLPVQQQQPQQKTPLPAPPPPPAAPAQTLVPAPAHLVATAGGGSTVIAHTATTHASVIQTVNHVLQGPGGKHIAHIAPSAPSPAVQLAPATPPIGHITVHPATLNHVAHLGSQLPLYPQPVAVSHIAHTLSHQQVNGTAGLGPPATVMAKPAVGAQVVHHPQLVGQTVLNPVTMVTMPSFPVSTLKLA</sequence>